<sequence length="1398" mass="158727">MASTSSFRASSSSSTPSIPRTTTYDVFLSFRGEDTRYNFTDHLYSALGRRGIRTFRDDRLRRGEAIAPELLKAIEESRSSVIVFSENYAHSRWCLDELVKIMECQKDLGHAVFPIFYHVDPSHVRKQEGSFGEAFAGYEENWKDKIPRWRTALTEAANLSGWHLLDDRYESNQIKEITNSIFRQLKCKRLDVGANLVGIDSHVKEMILRLHLESSDVRMVGIYGVGGIGKTTIAKVIYNELSCEFEYMSFLENIREGSNPQVLFHLQNQLLGDILEGEGSQNISSVAHRASMIKDILLSRRVFIVLDDVDDLSQLEYLLGHREWLGEGSRVIITTRNKHVLAVQEVDDLYEVEGLNFEEACELFSLYAFKQNLPKSDYRNLTCRVVGYCQGLPLALKVLGSLLCKKTIPQWEGELKKLDSEPKADIHKVLKRSYDGLDRIDKNIFLDLACFFKGEGRDFVLRILDGCDFPAETGISNLNDLCLITLPYNQICMHDLIQQMGWEIVRENFPVEPNKWSRLWDPCDFERALTADEGIKSVETMSLDLSKLKRVCSNSNVFAKMTKLRLLKVYSSSDIDSAHGDSDEDIEEVYDVVMKDASKMQLGQSFKFPSYELRYLRWDGYPLDSLPLNFDGGKLVELHLKCSNIKQLWQGHKDLERLKVIDLSYSRKLSQMSEFSSMPNLERLCLSGCVSLIDIHPSVGNMKKLTTLSLRSCNKLKNLPDSIGDLESLESLYLSNCSKFEKFPEKGGNMKSLTELDLKNTAIKDLPDSIGDLESLESLYLSNCSKFEKFPEKGGNMKSLTELDLKNTAIKDLPDSIGDLESLEILNLSDCAKFEKFPEKGGNMKSLKELDLQNTAIKDLPDSIGDLKSLKYLSLSDCSKFEKFPEKGGNMKRLLQLILSNTAIKDLPDSIGDLESLKYLYLSDCSKFEKFPEKGGNMKSLTELDLKNTAIKDLPDSIGDLESLEILNLSDCAKFEKFPEKGGNMKSLKELDLQNTAIKDLPDSIGDLESLKYLYLSDCSKFEKFPEKGGNMKSLLQLILSNTAIKDLPDSIGDLESLEYLHLSVCSKFEKFPEKGGNMKSLRELGLRNTAIKDLPDSIGDLESLEMLSLSNCPKFEVLPLSLKAIDAHLCTSKEDLSRLLWLCHRNWLKSTTEEFDRWQLSAFIPESSGIPEWITYQNLGSEVTEKLPINWCEDPDFPGFVLSCVYRPSCDYSSAYIFCHDFKCELNLHGNGFRFRDVCYHECWCDCHVNFKDSRDLVCVYWYPKTAIPEEDHHKYTHINASFKSDEVKIKKCGINVIFLGDQRNHMPMLEHPQNSGDNGSALQDANGNVHGANQDDEHYHIPLLDLLRNLSLGDNGSVVLEDTLGNRKRRRNDSLPDVVEEPLYKRLGGPHTEISL</sequence>
<evidence type="ECO:0000250" key="1">
    <source>
        <dbReference type="UniProtKB" id="V9M398"/>
    </source>
</evidence>
<evidence type="ECO:0000255" key="2"/>
<evidence type="ECO:0000255" key="3">
    <source>
        <dbReference type="PROSITE-ProRule" id="PRU00204"/>
    </source>
</evidence>
<evidence type="ECO:0000256" key="4">
    <source>
        <dbReference type="SAM" id="MobiDB-lite"/>
    </source>
</evidence>
<evidence type="ECO:0000269" key="5">
    <source>
    </source>
</evidence>
<evidence type="ECO:0000269" key="6">
    <source>
    </source>
</evidence>
<evidence type="ECO:0000269" key="7">
    <source>
    </source>
</evidence>
<evidence type="ECO:0000303" key="8">
    <source>
    </source>
</evidence>
<evidence type="ECO:0000305" key="9"/>
<evidence type="ECO:0000305" key="10">
    <source>
    </source>
</evidence>
<evidence type="ECO:0000305" key="11">
    <source>
    </source>
</evidence>
<evidence type="ECO:0007744" key="12">
    <source>
        <dbReference type="PDB" id="5KU7"/>
    </source>
</evidence>
<evidence type="ECO:0007829" key="13">
    <source>
        <dbReference type="PDB" id="5KU7"/>
    </source>
</evidence>
<name>RPV1_VITRO</name>
<organism>
    <name type="scientific">Vitis rotundifolia</name>
    <name type="common">Muscadine grape</name>
    <dbReference type="NCBI Taxonomy" id="103349"/>
    <lineage>
        <taxon>Eukaryota</taxon>
        <taxon>Viridiplantae</taxon>
        <taxon>Streptophyta</taxon>
        <taxon>Embryophyta</taxon>
        <taxon>Tracheophyta</taxon>
        <taxon>Spermatophyta</taxon>
        <taxon>Magnoliopsida</taxon>
        <taxon>eudicotyledons</taxon>
        <taxon>Gunneridae</taxon>
        <taxon>Pentapetalae</taxon>
        <taxon>rosids</taxon>
        <taxon>Vitales</taxon>
        <taxon>Vitaceae</taxon>
        <taxon>Viteae</taxon>
        <taxon>Vitis</taxon>
    </lineage>
</organism>
<protein>
    <recommendedName>
        <fullName evidence="9">Disease resistance protein RPV1</fullName>
    </recommendedName>
    <alternativeName>
        <fullName>NAD(+) hydrolase RPV1</fullName>
        <ecNumber evidence="11">3.2.2.6</ecNumber>
    </alternativeName>
    <alternativeName>
        <fullName evidence="8">Resistance to Plasmopara viticola protein</fullName>
        <shortName evidence="8">MrRVP1</shortName>
    </alternativeName>
</protein>
<proteinExistence type="evidence at protein level"/>
<gene>
    <name evidence="8" type="primary">RPV1</name>
</gene>
<accession>V9M2S5</accession>
<feature type="chain" id="PRO_0000448794" description="Disease resistance protein RPV1">
    <location>
        <begin position="1"/>
        <end position="1398"/>
    </location>
</feature>
<feature type="domain" description="TIR" evidence="3">
    <location>
        <begin position="22"/>
        <end position="185"/>
    </location>
</feature>
<feature type="domain" description="NB-ARC" evidence="2">
    <location>
        <begin position="201"/>
        <end position="440"/>
    </location>
</feature>
<feature type="repeat" description="LRR 1" evidence="2">
    <location>
        <begin position="203"/>
        <end position="225"/>
    </location>
</feature>
<feature type="repeat" description="LRR 2" evidence="2">
    <location>
        <begin position="423"/>
        <end position="447"/>
    </location>
</feature>
<feature type="repeat" description="LRR 3" evidence="2">
    <location>
        <begin position="478"/>
        <end position="504"/>
    </location>
</feature>
<feature type="repeat" description="LRR 4" evidence="2">
    <location>
        <begin position="535"/>
        <end position="560"/>
    </location>
</feature>
<feature type="repeat" description="LRR 5" evidence="2">
    <location>
        <begin position="610"/>
        <end position="632"/>
    </location>
</feature>
<feature type="repeat" description="LRR 6" evidence="2">
    <location>
        <begin position="633"/>
        <end position="657"/>
    </location>
</feature>
<feature type="repeat" description="LRR 7" evidence="2">
    <location>
        <begin position="678"/>
        <end position="702"/>
    </location>
</feature>
<feature type="repeat" description="LRR 8" evidence="2">
    <location>
        <begin position="703"/>
        <end position="726"/>
    </location>
</feature>
<feature type="repeat" description="LRR 9" evidence="2">
    <location>
        <begin position="728"/>
        <end position="750"/>
    </location>
</feature>
<feature type="repeat" description="LRR 10" evidence="2">
    <location>
        <begin position="751"/>
        <end position="773"/>
    </location>
</feature>
<feature type="repeat" description="LRR 11" evidence="2">
    <location>
        <begin position="775"/>
        <end position="797"/>
    </location>
</feature>
<feature type="repeat" description="LRR 12" evidence="2">
    <location>
        <begin position="798"/>
        <end position="820"/>
    </location>
</feature>
<feature type="repeat" description="LRR 13" evidence="2">
    <location>
        <begin position="822"/>
        <end position="844"/>
    </location>
</feature>
<feature type="repeat" description="LRR 14" evidence="2">
    <location>
        <begin position="845"/>
        <end position="867"/>
    </location>
</feature>
<feature type="repeat" description="LRR 15" evidence="2">
    <location>
        <begin position="869"/>
        <end position="891"/>
    </location>
</feature>
<feature type="repeat" description="LRR 16" evidence="2">
    <location>
        <begin position="892"/>
        <end position="914"/>
    </location>
</feature>
<feature type="repeat" description="LRR 17" evidence="2">
    <location>
        <begin position="916"/>
        <end position="938"/>
    </location>
</feature>
<feature type="repeat" description="LRR 18" evidence="2">
    <location>
        <begin position="939"/>
        <end position="961"/>
    </location>
</feature>
<feature type="repeat" description="LRR 19" evidence="2">
    <location>
        <begin position="963"/>
        <end position="985"/>
    </location>
</feature>
<feature type="repeat" description="LRR 20" evidence="2">
    <location>
        <begin position="986"/>
        <end position="1008"/>
    </location>
</feature>
<feature type="repeat" description="LRR 21" evidence="2">
    <location>
        <begin position="1010"/>
        <end position="1032"/>
    </location>
</feature>
<feature type="repeat" description="LRR 22" evidence="2">
    <location>
        <begin position="1033"/>
        <end position="1055"/>
    </location>
</feature>
<feature type="repeat" description="LRR 23" evidence="2">
    <location>
        <begin position="1079"/>
        <end position="1102"/>
    </location>
</feature>
<feature type="repeat" description="LRR 24" evidence="2">
    <location>
        <begin position="1105"/>
        <end position="1128"/>
    </location>
</feature>
<feature type="repeat" description="LRR 25" evidence="2">
    <location>
        <begin position="1346"/>
        <end position="1369"/>
    </location>
</feature>
<feature type="region of interest" description="Disordered" evidence="4">
    <location>
        <begin position="1315"/>
        <end position="1336"/>
    </location>
</feature>
<feature type="short sequence motif" description="Nuclear localization signal" evidence="5">
    <location>
        <begin position="1369"/>
        <end position="1373"/>
    </location>
</feature>
<feature type="compositionally biased region" description="Polar residues" evidence="4">
    <location>
        <begin position="1315"/>
        <end position="1328"/>
    </location>
</feature>
<feature type="active site" evidence="3">
    <location>
        <position position="97"/>
    </location>
</feature>
<feature type="binding site" evidence="1">
    <location>
        <begin position="31"/>
        <end position="36"/>
    </location>
    <ligand>
        <name>NAD(+)</name>
        <dbReference type="ChEBI" id="CHEBI:57540"/>
    </ligand>
</feature>
<feature type="binding site" evidence="1">
    <location>
        <position position="63"/>
    </location>
    <ligand>
        <name>NAD(+)</name>
        <dbReference type="ChEBI" id="CHEBI:57540"/>
    </ligand>
</feature>
<feature type="mutagenesis site" description="Abolished ability to induce cell death." evidence="6">
    <original>R</original>
    <variation>A</variation>
    <location>
        <position position="36"/>
    </location>
</feature>
<feature type="mutagenesis site" description="Abolished ability to induce cell death." evidence="6">
    <original>D</original>
    <variation>A</variation>
    <location>
        <position position="41"/>
    </location>
</feature>
<feature type="mutagenesis site" description="Abolished ability to induce cell death." evidence="6">
    <original>H</original>
    <variation>A</variation>
    <location>
        <position position="42"/>
    </location>
</feature>
<feature type="mutagenesis site" description="Decreased ability to induce cell death." evidence="6">
    <original>P</original>
    <variation>Y</variation>
    <location>
        <position position="121"/>
    </location>
</feature>
<feature type="mutagenesis site" description="Decreased ability to induce cell death." evidence="6">
    <original>R</original>
    <variation>A</variation>
    <location>
        <position position="125"/>
    </location>
</feature>
<feature type="mutagenesis site" description="Decreased ability to induce cell death." evidence="6">
    <original>G</original>
    <variation>R</variation>
    <location>
        <position position="161"/>
    </location>
</feature>
<feature type="mutagenesis site" description="Abolished nuclear localization." evidence="5">
    <original>KR</original>
    <variation>TS</variation>
    <location>
        <begin position="1370"/>
        <end position="1371"/>
    </location>
</feature>
<feature type="strand" evidence="13">
    <location>
        <begin position="24"/>
        <end position="30"/>
    </location>
</feature>
<feature type="helix" evidence="13">
    <location>
        <begin position="32"/>
        <end position="35"/>
    </location>
</feature>
<feature type="turn" evidence="13">
    <location>
        <begin position="36"/>
        <end position="38"/>
    </location>
</feature>
<feature type="helix" evidence="13">
    <location>
        <begin position="39"/>
        <end position="49"/>
    </location>
</feature>
<feature type="strand" evidence="13">
    <location>
        <begin position="63"/>
        <end position="65"/>
    </location>
</feature>
<feature type="helix" evidence="13">
    <location>
        <begin position="68"/>
        <end position="75"/>
    </location>
</feature>
<feature type="strand" evidence="13">
    <location>
        <begin position="77"/>
        <end position="84"/>
    </location>
</feature>
<feature type="helix" evidence="13">
    <location>
        <begin position="88"/>
        <end position="90"/>
    </location>
</feature>
<feature type="helix" evidence="13">
    <location>
        <begin position="92"/>
        <end position="107"/>
    </location>
</feature>
<feature type="strand" evidence="13">
    <location>
        <begin position="111"/>
        <end position="119"/>
    </location>
</feature>
<feature type="helix" evidence="13">
    <location>
        <begin position="121"/>
        <end position="126"/>
    </location>
</feature>
<feature type="helix" evidence="13">
    <location>
        <begin position="129"/>
        <end position="138"/>
    </location>
</feature>
<feature type="turn" evidence="13">
    <location>
        <begin position="139"/>
        <end position="141"/>
    </location>
</feature>
<feature type="turn" evidence="13">
    <location>
        <begin position="143"/>
        <end position="145"/>
    </location>
</feature>
<feature type="helix" evidence="13">
    <location>
        <begin position="146"/>
        <end position="157"/>
    </location>
</feature>
<feature type="strand" evidence="13">
    <location>
        <begin position="162"/>
        <end position="164"/>
    </location>
</feature>
<feature type="strand" evidence="13">
    <location>
        <begin position="166"/>
        <end position="168"/>
    </location>
</feature>
<feature type="helix" evidence="13">
    <location>
        <begin position="170"/>
        <end position="191"/>
    </location>
</feature>
<dbReference type="EC" id="3.2.2.6" evidence="11"/>
<dbReference type="EMBL" id="JQ904634">
    <property type="protein sequence ID" value="AGC24028.1"/>
    <property type="molecule type" value="Genomic_DNA"/>
</dbReference>
<dbReference type="PDB" id="5KU7">
    <property type="method" value="X-ray"/>
    <property type="resolution" value="2.30 A"/>
    <property type="chains" value="A/B=20-193"/>
</dbReference>
<dbReference type="PDBsum" id="5KU7"/>
<dbReference type="SMR" id="V9M2S5"/>
<dbReference type="GO" id="GO:0005737">
    <property type="term" value="C:cytoplasm"/>
    <property type="evidence" value="ECO:0000314"/>
    <property type="project" value="UniProtKB"/>
</dbReference>
<dbReference type="GO" id="GO:0005634">
    <property type="term" value="C:nucleus"/>
    <property type="evidence" value="ECO:0000314"/>
    <property type="project" value="UniProtKB"/>
</dbReference>
<dbReference type="GO" id="GO:0043531">
    <property type="term" value="F:ADP binding"/>
    <property type="evidence" value="ECO:0007669"/>
    <property type="project" value="InterPro"/>
</dbReference>
<dbReference type="GO" id="GO:0061809">
    <property type="term" value="F:NAD+ nucleosidase activity, cyclic ADP-ribose generating"/>
    <property type="evidence" value="ECO:0007669"/>
    <property type="project" value="UniProtKB-EC"/>
</dbReference>
<dbReference type="GO" id="GO:0042803">
    <property type="term" value="F:protein homodimerization activity"/>
    <property type="evidence" value="ECO:0000314"/>
    <property type="project" value="UniProtKB"/>
</dbReference>
<dbReference type="GO" id="GO:0050832">
    <property type="term" value="P:defense response to fungus"/>
    <property type="evidence" value="ECO:0000315"/>
    <property type="project" value="UniProtKB"/>
</dbReference>
<dbReference type="GO" id="GO:0043068">
    <property type="term" value="P:positive regulation of programmed cell death"/>
    <property type="evidence" value="ECO:0000314"/>
    <property type="project" value="UniProtKB"/>
</dbReference>
<dbReference type="GO" id="GO:0007165">
    <property type="term" value="P:signal transduction"/>
    <property type="evidence" value="ECO:0007669"/>
    <property type="project" value="InterPro"/>
</dbReference>
<dbReference type="FunFam" id="3.40.50.10140:FF:000007">
    <property type="entry name" value="Disease resistance protein (TIR-NBS-LRR class)"/>
    <property type="match status" value="1"/>
</dbReference>
<dbReference type="Gene3D" id="1.10.8.430">
    <property type="entry name" value="Helical domain of apoptotic protease-activating factors"/>
    <property type="match status" value="1"/>
</dbReference>
<dbReference type="Gene3D" id="3.40.50.300">
    <property type="entry name" value="P-loop containing nucleotide triphosphate hydrolases"/>
    <property type="match status" value="1"/>
</dbReference>
<dbReference type="Gene3D" id="3.80.10.10">
    <property type="entry name" value="Ribonuclease Inhibitor"/>
    <property type="match status" value="4"/>
</dbReference>
<dbReference type="Gene3D" id="3.40.50.10140">
    <property type="entry name" value="Toll/interleukin-1 receptor homology (TIR) domain"/>
    <property type="match status" value="1"/>
</dbReference>
<dbReference type="InterPro" id="IPR042197">
    <property type="entry name" value="Apaf_helical"/>
</dbReference>
<dbReference type="InterPro" id="IPR045344">
    <property type="entry name" value="C-JID"/>
</dbReference>
<dbReference type="InterPro" id="IPR044974">
    <property type="entry name" value="Disease_R_plants"/>
</dbReference>
<dbReference type="InterPro" id="IPR011713">
    <property type="entry name" value="Leu-rich_rpt_3"/>
</dbReference>
<dbReference type="InterPro" id="IPR003591">
    <property type="entry name" value="Leu-rich_rpt_typical-subtyp"/>
</dbReference>
<dbReference type="InterPro" id="IPR032675">
    <property type="entry name" value="LRR_dom_sf"/>
</dbReference>
<dbReference type="InterPro" id="IPR055414">
    <property type="entry name" value="LRR_R13L4/SHOC2-like"/>
</dbReference>
<dbReference type="InterPro" id="IPR002182">
    <property type="entry name" value="NB-ARC"/>
</dbReference>
<dbReference type="InterPro" id="IPR027417">
    <property type="entry name" value="P-loop_NTPase"/>
</dbReference>
<dbReference type="InterPro" id="IPR000157">
    <property type="entry name" value="TIR_dom"/>
</dbReference>
<dbReference type="InterPro" id="IPR035897">
    <property type="entry name" value="Toll_tir_struct_dom_sf"/>
</dbReference>
<dbReference type="InterPro" id="IPR036390">
    <property type="entry name" value="WH_DNA-bd_sf"/>
</dbReference>
<dbReference type="PANTHER" id="PTHR11017:SF570">
    <property type="entry name" value="DISEASE RESISTANCE PROTEIN (TIR-NBS CLASS)-RELATED"/>
    <property type="match status" value="1"/>
</dbReference>
<dbReference type="PANTHER" id="PTHR11017">
    <property type="entry name" value="LEUCINE-RICH REPEAT-CONTAINING PROTEIN"/>
    <property type="match status" value="1"/>
</dbReference>
<dbReference type="Pfam" id="PF20160">
    <property type="entry name" value="C-JID"/>
    <property type="match status" value="1"/>
</dbReference>
<dbReference type="Pfam" id="PF23598">
    <property type="entry name" value="LRR_14"/>
    <property type="match status" value="3"/>
</dbReference>
<dbReference type="Pfam" id="PF07725">
    <property type="entry name" value="LRR_3"/>
    <property type="match status" value="1"/>
</dbReference>
<dbReference type="Pfam" id="PF00931">
    <property type="entry name" value="NB-ARC"/>
    <property type="match status" value="1"/>
</dbReference>
<dbReference type="Pfam" id="PF01582">
    <property type="entry name" value="TIR"/>
    <property type="match status" value="1"/>
</dbReference>
<dbReference type="Pfam" id="PF23282">
    <property type="entry name" value="WHD_ROQ1"/>
    <property type="match status" value="1"/>
</dbReference>
<dbReference type="PRINTS" id="PR00364">
    <property type="entry name" value="DISEASERSIST"/>
</dbReference>
<dbReference type="SMART" id="SM00369">
    <property type="entry name" value="LRR_TYP"/>
    <property type="match status" value="9"/>
</dbReference>
<dbReference type="SMART" id="SM00255">
    <property type="entry name" value="TIR"/>
    <property type="match status" value="1"/>
</dbReference>
<dbReference type="SUPFAM" id="SSF52058">
    <property type="entry name" value="L domain-like"/>
    <property type="match status" value="2"/>
</dbReference>
<dbReference type="SUPFAM" id="SSF52540">
    <property type="entry name" value="P-loop containing nucleoside triphosphate hydrolases"/>
    <property type="match status" value="1"/>
</dbReference>
<dbReference type="SUPFAM" id="SSF52200">
    <property type="entry name" value="Toll/Interleukin receptor TIR domain"/>
    <property type="match status" value="1"/>
</dbReference>
<dbReference type="SUPFAM" id="SSF46785">
    <property type="entry name" value="Winged helix' DNA-binding domain"/>
    <property type="match status" value="1"/>
</dbReference>
<dbReference type="PROSITE" id="PS50104">
    <property type="entry name" value="TIR"/>
    <property type="match status" value="1"/>
</dbReference>
<comment type="function">
    <text evidence="5 6 7">Disease resistance (R) protein that confers resistance to multiple powdery and downy mildew by promoting cell death (PubMed:24033846, PubMed:28008335). Acts as a NAD(+) hydrolase (NADase): in response to activation, catalyzes cleavage of NAD(+) into ADP-D-ribose (ADPR) and nicotinamide; NAD(+) cleavage triggering a defense system that promotes cell death (PubMed:31439792).</text>
</comment>
<comment type="catalytic activity">
    <reaction evidence="11">
        <text>NAD(+) + H2O = ADP-D-ribose + nicotinamide + H(+)</text>
        <dbReference type="Rhea" id="RHEA:16301"/>
        <dbReference type="ChEBI" id="CHEBI:15377"/>
        <dbReference type="ChEBI" id="CHEBI:15378"/>
        <dbReference type="ChEBI" id="CHEBI:17154"/>
        <dbReference type="ChEBI" id="CHEBI:57540"/>
        <dbReference type="ChEBI" id="CHEBI:57967"/>
        <dbReference type="EC" id="3.2.2.6"/>
    </reaction>
    <physiologicalReaction direction="left-to-right" evidence="11">
        <dbReference type="Rhea" id="RHEA:16302"/>
    </physiologicalReaction>
</comment>
<comment type="subunit">
    <text evidence="10">Homodimer; homodimerization is required for NAD(+) hydrolase (NADase) activity.</text>
</comment>
<comment type="subcellular location">
    <subcellularLocation>
        <location evidence="5">Nucleus</location>
    </subcellularLocation>
    <subcellularLocation>
        <location evidence="5">Cytoplasm</location>
    </subcellularLocation>
</comment>
<comment type="domain">
    <text evidence="3">The TIR domain mediates NAD(+) hydrolase (NADase) activity. Self-association of TIR domains is required for NADase activity.</text>
</comment>
<comment type="similarity">
    <text evidence="9">Belongs to the disease resistance TIR-NB-LRR family.</text>
</comment>
<keyword id="KW-0002">3D-structure</keyword>
<keyword id="KW-0963">Cytoplasm</keyword>
<keyword id="KW-0378">Hydrolase</keyword>
<keyword id="KW-0433">Leucine-rich repeat</keyword>
<keyword id="KW-0520">NAD</keyword>
<keyword id="KW-0539">Nucleus</keyword>
<keyword id="KW-0611">Plant defense</keyword>
<keyword id="KW-0677">Repeat</keyword>
<reference key="1">
    <citation type="journal article" date="2013" name="Plant J.">
        <title>Genetic dissection of a TIR-NB-LRR locus from the wild North American grapevine species Muscadinia rotundifolia identifies paralogous genes conferring resistance to major fungal and oomycete pathogens in cultivated grapevine.</title>
        <authorList>
            <person name="Feechan A."/>
            <person name="Anderson C."/>
            <person name="Torregrosa L."/>
            <person name="Jermakow A."/>
            <person name="Mestre P."/>
            <person name="Wiedemann-Merdinoglu S."/>
            <person name="Merdinoglu D."/>
            <person name="Walker A.R."/>
            <person name="Cadle-Davidson L."/>
            <person name="Reisch B."/>
            <person name="Aubourg S."/>
            <person name="Bentahar N."/>
            <person name="Shrestha B."/>
            <person name="Bouquet A."/>
            <person name="Adam-Blondon A.F."/>
            <person name="Thomas M.R."/>
            <person name="Dry I.B."/>
        </authorList>
    </citation>
    <scope>NUCLEOTIDE SEQUENCE [GENOMIC DNA]</scope>
    <scope>FUNCTION</scope>
    <scope>SUBCELLULAR LOCATION</scope>
    <scope>MUTAGENESIS OF 1370-LYS-ARG-1371</scope>
</reference>
<reference key="2">
    <citation type="journal article" date="2019" name="Science">
        <title>NAD+ cleavage activity by animal and plant TIR domains in cell death pathways.</title>
        <authorList>
            <person name="Horsefield S."/>
            <person name="Burdett H."/>
            <person name="Zhang X."/>
            <person name="Manik M.K."/>
            <person name="Shi Y."/>
            <person name="Chen J."/>
            <person name="Qi T."/>
            <person name="Gilley J."/>
            <person name="Lai J.S."/>
            <person name="Rank M.X."/>
            <person name="Casey L.W."/>
            <person name="Gu W."/>
            <person name="Ericsson D.J."/>
            <person name="Foley G."/>
            <person name="Hughes R.O."/>
            <person name="Bosanac T."/>
            <person name="von Itzstein M."/>
            <person name="Rathjen J.P."/>
            <person name="Nanson J.D."/>
            <person name="Boden M."/>
            <person name="Dry I.B."/>
            <person name="Williams S.J."/>
            <person name="Staskawicz B.J."/>
            <person name="Coleman M.P."/>
            <person name="Ve T."/>
            <person name="Dodds P.N."/>
            <person name="Kobe B."/>
        </authorList>
    </citation>
    <scope>FUNCTION</scope>
    <scope>CATALYTIC ACTIVITY</scope>
</reference>
<reference evidence="12" key="3">
    <citation type="journal article" date="2016" name="Front. Plant Sci.">
        <title>Structure and Function of the TIR Domain from the Grape NLR Protein RPV1.</title>
        <authorList>
            <person name="Williams S.J."/>
            <person name="Yin L."/>
            <person name="Foley G."/>
            <person name="Casey L.W."/>
            <person name="Outram M.A."/>
            <person name="Ericsson D.J."/>
            <person name="Lu J."/>
            <person name="Boden M."/>
            <person name="Dry I.B."/>
            <person name="Kobe B."/>
        </authorList>
    </citation>
    <scope>X-RAY CRYSTALLOGRAPHY (2.30 ANGSTROMS) OF 20-193</scope>
    <scope>FUNCTION</scope>
    <scope>SUBUNIT</scope>
    <scope>MUTAGENESIS OF ARG-36; ASP-41; HIS-42; PRO-121; ARG-125 AND GLY-161</scope>
</reference>